<sequence>MTKAFDSALRLLTRREYSAMELCDKLKQKGFSTNDVQNALYECQRLGYQSDVRFVENYIRVRIHQGYGPLKIRQELKNKGIDPDLIQSVLHQEKDNWVNYALRAWEKKFKRQDDFSYSEIQKQQRFLLYRGFDRDVISKVFKEVKSSYLI</sequence>
<comment type="function">
    <text evidence="1">Modulates RecA activity.</text>
</comment>
<comment type="subcellular location">
    <subcellularLocation>
        <location evidence="1">Cytoplasm</location>
    </subcellularLocation>
</comment>
<comment type="similarity">
    <text evidence="1">Belongs to the RecX family.</text>
</comment>
<gene>
    <name evidence="1" type="primary">recX</name>
    <name type="ordered locus">LPC_1244</name>
</gene>
<dbReference type="EMBL" id="CP000675">
    <property type="protein sequence ID" value="ABQ55207.1"/>
    <property type="molecule type" value="Genomic_DNA"/>
</dbReference>
<dbReference type="RefSeq" id="WP_010947526.1">
    <property type="nucleotide sequence ID" value="NZ_JAPMSS010000005.1"/>
</dbReference>
<dbReference type="SMR" id="A5ICV7"/>
<dbReference type="GeneID" id="57035792"/>
<dbReference type="KEGG" id="lpc:LPC_1244"/>
<dbReference type="HOGENOM" id="CLU_066607_3_2_6"/>
<dbReference type="GO" id="GO:0005737">
    <property type="term" value="C:cytoplasm"/>
    <property type="evidence" value="ECO:0007669"/>
    <property type="project" value="UniProtKB-SubCell"/>
</dbReference>
<dbReference type="GO" id="GO:0006282">
    <property type="term" value="P:regulation of DNA repair"/>
    <property type="evidence" value="ECO:0007669"/>
    <property type="project" value="UniProtKB-UniRule"/>
</dbReference>
<dbReference type="Gene3D" id="1.10.10.10">
    <property type="entry name" value="Winged helix-like DNA-binding domain superfamily/Winged helix DNA-binding domain"/>
    <property type="match status" value="3"/>
</dbReference>
<dbReference type="HAMAP" id="MF_01114">
    <property type="entry name" value="RecX"/>
    <property type="match status" value="1"/>
</dbReference>
<dbReference type="InterPro" id="IPR053926">
    <property type="entry name" value="RecX_HTH_1st"/>
</dbReference>
<dbReference type="InterPro" id="IPR053924">
    <property type="entry name" value="RecX_HTH_2nd"/>
</dbReference>
<dbReference type="InterPro" id="IPR053925">
    <property type="entry name" value="RecX_HTH_3rd"/>
</dbReference>
<dbReference type="InterPro" id="IPR003783">
    <property type="entry name" value="Regulatory_RecX"/>
</dbReference>
<dbReference type="InterPro" id="IPR036388">
    <property type="entry name" value="WH-like_DNA-bd_sf"/>
</dbReference>
<dbReference type="NCBIfam" id="NF001057">
    <property type="entry name" value="PRK00117.3-3"/>
    <property type="match status" value="1"/>
</dbReference>
<dbReference type="PANTHER" id="PTHR33602">
    <property type="entry name" value="REGULATORY PROTEIN RECX FAMILY PROTEIN"/>
    <property type="match status" value="1"/>
</dbReference>
<dbReference type="PANTHER" id="PTHR33602:SF1">
    <property type="entry name" value="REGULATORY PROTEIN RECX FAMILY PROTEIN"/>
    <property type="match status" value="1"/>
</dbReference>
<dbReference type="Pfam" id="PF21982">
    <property type="entry name" value="RecX_HTH1"/>
    <property type="match status" value="1"/>
</dbReference>
<dbReference type="Pfam" id="PF02631">
    <property type="entry name" value="RecX_HTH2"/>
    <property type="match status" value="1"/>
</dbReference>
<dbReference type="Pfam" id="PF21981">
    <property type="entry name" value="RecX_HTH3"/>
    <property type="match status" value="1"/>
</dbReference>
<evidence type="ECO:0000255" key="1">
    <source>
        <dbReference type="HAMAP-Rule" id="MF_01114"/>
    </source>
</evidence>
<accession>A5ICV7</accession>
<keyword id="KW-0963">Cytoplasm</keyword>
<organism>
    <name type="scientific">Legionella pneumophila (strain Corby)</name>
    <dbReference type="NCBI Taxonomy" id="400673"/>
    <lineage>
        <taxon>Bacteria</taxon>
        <taxon>Pseudomonadati</taxon>
        <taxon>Pseudomonadota</taxon>
        <taxon>Gammaproteobacteria</taxon>
        <taxon>Legionellales</taxon>
        <taxon>Legionellaceae</taxon>
        <taxon>Legionella</taxon>
    </lineage>
</organism>
<protein>
    <recommendedName>
        <fullName evidence="1">Regulatory protein RecX</fullName>
    </recommendedName>
</protein>
<name>RECX_LEGPC</name>
<feature type="chain" id="PRO_1000065184" description="Regulatory protein RecX">
    <location>
        <begin position="1"/>
        <end position="150"/>
    </location>
</feature>
<reference key="1">
    <citation type="submission" date="2006-11" db="EMBL/GenBank/DDBJ databases">
        <title>Identification and characterization of a new conjugation/ type IVA secretion system (trb/tra) of L. pneumophila Corby localized on a mobile genomic island.</title>
        <authorList>
            <person name="Gloeckner G."/>
            <person name="Albert-Weissenberger C."/>
            <person name="Weinmann E."/>
            <person name="Jacobi S."/>
            <person name="Schunder E."/>
            <person name="Steinert M."/>
            <person name="Buchrieser C."/>
            <person name="Hacker J."/>
            <person name="Heuner K."/>
        </authorList>
    </citation>
    <scope>NUCLEOTIDE SEQUENCE [LARGE SCALE GENOMIC DNA]</scope>
    <source>
        <strain>Corby</strain>
    </source>
</reference>
<proteinExistence type="inferred from homology"/>